<proteinExistence type="evidence at protein level"/>
<reference key="1">
    <citation type="journal article" date="1990" name="Proc. Natl. Acad. Sci. U.S.A.">
        <title>The mtr locus is a two-gene operon required for transcription attenuation in the trp operon of Bacillus subtilis.</title>
        <authorList>
            <person name="Gollnick P."/>
            <person name="Ishino S."/>
            <person name="Kuroda M.I."/>
            <person name="Henner D.J."/>
            <person name="Yanofsky C."/>
        </authorList>
    </citation>
    <scope>NUCLEOTIDE SEQUENCE [GENOMIC DNA]</scope>
</reference>
<reference key="2">
    <citation type="journal article" date="1997" name="Nature">
        <title>The complete genome sequence of the Gram-positive bacterium Bacillus subtilis.</title>
        <authorList>
            <person name="Kunst F."/>
            <person name="Ogasawara N."/>
            <person name="Moszer I."/>
            <person name="Albertini A.M."/>
            <person name="Alloni G."/>
            <person name="Azevedo V."/>
            <person name="Bertero M.G."/>
            <person name="Bessieres P."/>
            <person name="Bolotin A."/>
            <person name="Borchert S."/>
            <person name="Borriss R."/>
            <person name="Boursier L."/>
            <person name="Brans A."/>
            <person name="Braun M."/>
            <person name="Brignell S.C."/>
            <person name="Bron S."/>
            <person name="Brouillet S."/>
            <person name="Bruschi C.V."/>
            <person name="Caldwell B."/>
            <person name="Capuano V."/>
            <person name="Carter N.M."/>
            <person name="Choi S.-K."/>
            <person name="Codani J.-J."/>
            <person name="Connerton I.F."/>
            <person name="Cummings N.J."/>
            <person name="Daniel R.A."/>
            <person name="Denizot F."/>
            <person name="Devine K.M."/>
            <person name="Duesterhoeft A."/>
            <person name="Ehrlich S.D."/>
            <person name="Emmerson P.T."/>
            <person name="Entian K.-D."/>
            <person name="Errington J."/>
            <person name="Fabret C."/>
            <person name="Ferrari E."/>
            <person name="Foulger D."/>
            <person name="Fritz C."/>
            <person name="Fujita M."/>
            <person name="Fujita Y."/>
            <person name="Fuma S."/>
            <person name="Galizzi A."/>
            <person name="Galleron N."/>
            <person name="Ghim S.-Y."/>
            <person name="Glaser P."/>
            <person name="Goffeau A."/>
            <person name="Golightly E.J."/>
            <person name="Grandi G."/>
            <person name="Guiseppi G."/>
            <person name="Guy B.J."/>
            <person name="Haga K."/>
            <person name="Haiech J."/>
            <person name="Harwood C.R."/>
            <person name="Henaut A."/>
            <person name="Hilbert H."/>
            <person name="Holsappel S."/>
            <person name="Hosono S."/>
            <person name="Hullo M.-F."/>
            <person name="Itaya M."/>
            <person name="Jones L.-M."/>
            <person name="Joris B."/>
            <person name="Karamata D."/>
            <person name="Kasahara Y."/>
            <person name="Klaerr-Blanchard M."/>
            <person name="Klein C."/>
            <person name="Kobayashi Y."/>
            <person name="Koetter P."/>
            <person name="Koningstein G."/>
            <person name="Krogh S."/>
            <person name="Kumano M."/>
            <person name="Kurita K."/>
            <person name="Lapidus A."/>
            <person name="Lardinois S."/>
            <person name="Lauber J."/>
            <person name="Lazarevic V."/>
            <person name="Lee S.-M."/>
            <person name="Levine A."/>
            <person name="Liu H."/>
            <person name="Masuda S."/>
            <person name="Mauel C."/>
            <person name="Medigue C."/>
            <person name="Medina N."/>
            <person name="Mellado R.P."/>
            <person name="Mizuno M."/>
            <person name="Moestl D."/>
            <person name="Nakai S."/>
            <person name="Noback M."/>
            <person name="Noone D."/>
            <person name="O'Reilly M."/>
            <person name="Ogawa K."/>
            <person name="Ogiwara A."/>
            <person name="Oudega B."/>
            <person name="Park S.-H."/>
            <person name="Parro V."/>
            <person name="Pohl T.M."/>
            <person name="Portetelle D."/>
            <person name="Porwollik S."/>
            <person name="Prescott A.M."/>
            <person name="Presecan E."/>
            <person name="Pujic P."/>
            <person name="Purnelle B."/>
            <person name="Rapoport G."/>
            <person name="Rey M."/>
            <person name="Reynolds S."/>
            <person name="Rieger M."/>
            <person name="Rivolta C."/>
            <person name="Rocha E."/>
            <person name="Roche B."/>
            <person name="Rose M."/>
            <person name="Sadaie Y."/>
            <person name="Sato T."/>
            <person name="Scanlan E."/>
            <person name="Schleich S."/>
            <person name="Schroeter R."/>
            <person name="Scoffone F."/>
            <person name="Sekiguchi J."/>
            <person name="Sekowska A."/>
            <person name="Seror S.J."/>
            <person name="Serror P."/>
            <person name="Shin B.-S."/>
            <person name="Soldo B."/>
            <person name="Sorokin A."/>
            <person name="Tacconi E."/>
            <person name="Takagi T."/>
            <person name="Takahashi H."/>
            <person name="Takemaru K."/>
            <person name="Takeuchi M."/>
            <person name="Tamakoshi A."/>
            <person name="Tanaka T."/>
            <person name="Terpstra P."/>
            <person name="Tognoni A."/>
            <person name="Tosato V."/>
            <person name="Uchiyama S."/>
            <person name="Vandenbol M."/>
            <person name="Vannier F."/>
            <person name="Vassarotti A."/>
            <person name="Viari A."/>
            <person name="Wambutt R."/>
            <person name="Wedler E."/>
            <person name="Wedler H."/>
            <person name="Weitzenegger T."/>
            <person name="Winters P."/>
            <person name="Wipat A."/>
            <person name="Yamamoto H."/>
            <person name="Yamane K."/>
            <person name="Yasumoto K."/>
            <person name="Yata K."/>
            <person name="Yoshida K."/>
            <person name="Yoshikawa H.-F."/>
            <person name="Zumstein E."/>
            <person name="Yoshikawa H."/>
            <person name="Danchin A."/>
        </authorList>
    </citation>
    <scope>NUCLEOTIDE SEQUENCE [LARGE SCALE GENOMIC DNA]</scope>
    <source>
        <strain>168</strain>
    </source>
</reference>
<reference key="3">
    <citation type="journal article" date="1991" name="J. Bacteriol.">
        <title>Molecular cloning, nucleotide sequence, and characterization of the Bacillus subtilis gene encoding the DNA-binding protein HBsu.</title>
        <authorList>
            <person name="Micka B."/>
            <person name="Groch N."/>
            <person name="Heinemann U."/>
            <person name="Marahiel M.A."/>
        </authorList>
    </citation>
    <scope>NUCLEOTIDE SEQUENCE [GENOMIC DNA] OF 1-19</scope>
    <source>
        <strain>168 / JH642</strain>
    </source>
</reference>
<reference key="4">
    <citation type="journal article" date="1992" name="J. Bacteriol.">
        <title>The mtrAB operon of Bacillus subtilis encodes GTP cyclohydrolase I (MtrA), an enzyme involved in folic acid biosynthesis, and MtrB, a regulator of tryptophan biosynthesis.</title>
        <authorList>
            <person name="Babitzke P."/>
            <person name="Gollnick P."/>
            <person name="Yanofsky C."/>
        </authorList>
    </citation>
    <scope>FUNCTION</scope>
</reference>
<reference key="5">
    <citation type="journal article" date="1995" name="Biochem. J.">
        <title>Enzymic characterization of Bacillus subtilis GTP cyclohydrolase I. Evidence for a chemical dephosphorylation of dihydroneopterin triphosphate.</title>
        <authorList>
            <person name="de Saizieu A."/>
            <person name="Vankan P."/>
            <person name="van Loon A.P."/>
        </authorList>
    </citation>
    <scope>CHARACTERIZATION</scope>
</reference>
<gene>
    <name type="primary">folE</name>
    <name type="synonym">mtrA</name>
    <name type="ordered locus">BSU22780</name>
</gene>
<comment type="catalytic activity">
    <reaction>
        <text>GTP + H2O = 7,8-dihydroneopterin 3'-triphosphate + formate + H(+)</text>
        <dbReference type="Rhea" id="RHEA:17473"/>
        <dbReference type="ChEBI" id="CHEBI:15377"/>
        <dbReference type="ChEBI" id="CHEBI:15378"/>
        <dbReference type="ChEBI" id="CHEBI:15740"/>
        <dbReference type="ChEBI" id="CHEBI:37565"/>
        <dbReference type="ChEBI" id="CHEBI:58462"/>
        <dbReference type="EC" id="3.5.4.16"/>
    </reaction>
</comment>
<comment type="activity regulation">
    <text>K(+) ions moderately increases the Vmax, whereas UTP and Ca(2+) and Mg(2+) ions drastically increase the Km for GTP.</text>
</comment>
<comment type="pathway">
    <text>Cofactor biosynthesis; 7,8-dihydroneopterin triphosphate biosynthesis; 7,8-dihydroneopterin triphosphate from GTP: step 1/1.</text>
</comment>
<comment type="subunit">
    <text evidence="1">Toroid-shaped homodecamer, composed of two pentamers of five dimers.</text>
</comment>
<comment type="similarity">
    <text evidence="2">Belongs to the GTP cyclohydrolase I family.</text>
</comment>
<name>GCH1_BACSU</name>
<accession>P19465</accession>
<evidence type="ECO:0000250" key="1"/>
<evidence type="ECO:0000305" key="2"/>
<keyword id="KW-0342">GTP-binding</keyword>
<keyword id="KW-0378">Hydrolase</keyword>
<keyword id="KW-0479">Metal-binding</keyword>
<keyword id="KW-0547">Nucleotide-binding</keyword>
<keyword id="KW-0554">One-carbon metabolism</keyword>
<keyword id="KW-1185">Reference proteome</keyword>
<keyword id="KW-0862">Zinc</keyword>
<organism>
    <name type="scientific">Bacillus subtilis (strain 168)</name>
    <dbReference type="NCBI Taxonomy" id="224308"/>
    <lineage>
        <taxon>Bacteria</taxon>
        <taxon>Bacillati</taxon>
        <taxon>Bacillota</taxon>
        <taxon>Bacilli</taxon>
        <taxon>Bacillales</taxon>
        <taxon>Bacillaceae</taxon>
        <taxon>Bacillus</taxon>
    </lineage>
</organism>
<sequence>MKEVNKEQIEQAVRQILEAIGEDPNREGLLDTPKRVAKMYAEVFSGLNEDPKEHFQTIFGENHEELVLVKDIAFHSMCEHHLVPFYGKAHVAYIPRGGKVTGLSKLARAVEAVAKRPQLQERITSTIAESIVETLDPHGVMVVVEAEHMCMTMRGVRKPGAKTVTSAVRGVFKDDAAARAEVLEHIKRQD</sequence>
<dbReference type="EC" id="3.5.4.16"/>
<dbReference type="EMBL" id="M37320">
    <property type="protein sequence ID" value="AAA22615.1"/>
    <property type="molecule type" value="Genomic_DNA"/>
</dbReference>
<dbReference type="EMBL" id="M80245">
    <property type="protein sequence ID" value="AAA20852.1"/>
    <property type="molecule type" value="Genomic_DNA"/>
</dbReference>
<dbReference type="EMBL" id="AL009126">
    <property type="protein sequence ID" value="CAB14194.1"/>
    <property type="molecule type" value="Genomic_DNA"/>
</dbReference>
<dbReference type="EMBL" id="X52418">
    <property type="status" value="NOT_ANNOTATED_CDS"/>
    <property type="molecule type" value="Genomic_DNA"/>
</dbReference>
<dbReference type="PIR" id="A38256">
    <property type="entry name" value="A38256"/>
</dbReference>
<dbReference type="RefSeq" id="WP_003225516.1">
    <property type="nucleotide sequence ID" value="NZ_OZ025638.1"/>
</dbReference>
<dbReference type="SMR" id="P19465"/>
<dbReference type="FunCoup" id="P19465">
    <property type="interactions" value="462"/>
</dbReference>
<dbReference type="STRING" id="224308.BSU22780"/>
<dbReference type="PaxDb" id="224308-BSU22780"/>
<dbReference type="EnsemblBacteria" id="CAB14194">
    <property type="protein sequence ID" value="CAB14194"/>
    <property type="gene ID" value="BSU_22780"/>
</dbReference>
<dbReference type="GeneID" id="86873183"/>
<dbReference type="GeneID" id="938994"/>
<dbReference type="KEGG" id="bsu:BSU22780"/>
<dbReference type="eggNOG" id="COG0302">
    <property type="taxonomic scope" value="Bacteria"/>
</dbReference>
<dbReference type="InParanoid" id="P19465"/>
<dbReference type="OrthoDB" id="9801207at2"/>
<dbReference type="PhylomeDB" id="P19465"/>
<dbReference type="BioCyc" id="BSUB:BSU22780-MONOMER"/>
<dbReference type="BioCyc" id="MetaCyc:BSU22780-MONOMER"/>
<dbReference type="UniPathway" id="UPA00848">
    <property type="reaction ID" value="UER00151"/>
</dbReference>
<dbReference type="PRO" id="PR:P19465"/>
<dbReference type="Proteomes" id="UP000001570">
    <property type="component" value="Chromosome"/>
</dbReference>
<dbReference type="GO" id="GO:0005737">
    <property type="term" value="C:cytoplasm"/>
    <property type="evidence" value="ECO:0000318"/>
    <property type="project" value="GO_Central"/>
</dbReference>
<dbReference type="GO" id="GO:0005525">
    <property type="term" value="F:GTP binding"/>
    <property type="evidence" value="ECO:0000318"/>
    <property type="project" value="GO_Central"/>
</dbReference>
<dbReference type="GO" id="GO:0003934">
    <property type="term" value="F:GTP cyclohydrolase I activity"/>
    <property type="evidence" value="ECO:0000318"/>
    <property type="project" value="GO_Central"/>
</dbReference>
<dbReference type="GO" id="GO:0008270">
    <property type="term" value="F:zinc ion binding"/>
    <property type="evidence" value="ECO:0000318"/>
    <property type="project" value="GO_Central"/>
</dbReference>
<dbReference type="GO" id="GO:0006730">
    <property type="term" value="P:one-carbon metabolic process"/>
    <property type="evidence" value="ECO:0007669"/>
    <property type="project" value="UniProtKB-UniRule"/>
</dbReference>
<dbReference type="GO" id="GO:0006729">
    <property type="term" value="P:tetrahydrobiopterin biosynthetic process"/>
    <property type="evidence" value="ECO:0000318"/>
    <property type="project" value="GO_Central"/>
</dbReference>
<dbReference type="GO" id="GO:0046654">
    <property type="term" value="P:tetrahydrofolate biosynthetic process"/>
    <property type="evidence" value="ECO:0007669"/>
    <property type="project" value="UniProtKB-UniRule"/>
</dbReference>
<dbReference type="CDD" id="cd00642">
    <property type="entry name" value="GTP_cyclohydro1"/>
    <property type="match status" value="1"/>
</dbReference>
<dbReference type="FunFam" id="1.10.286.10:FF:000001">
    <property type="entry name" value="GTP cyclohydrolase 1"/>
    <property type="match status" value="1"/>
</dbReference>
<dbReference type="FunFam" id="3.30.1130.10:FF:000001">
    <property type="entry name" value="GTP cyclohydrolase 1"/>
    <property type="match status" value="1"/>
</dbReference>
<dbReference type="Gene3D" id="1.10.286.10">
    <property type="match status" value="1"/>
</dbReference>
<dbReference type="Gene3D" id="3.30.1130.10">
    <property type="match status" value="1"/>
</dbReference>
<dbReference type="HAMAP" id="MF_00223">
    <property type="entry name" value="FolE"/>
    <property type="match status" value="1"/>
</dbReference>
<dbReference type="InterPro" id="IPR043133">
    <property type="entry name" value="GTP-CH-I_C/QueF"/>
</dbReference>
<dbReference type="InterPro" id="IPR043134">
    <property type="entry name" value="GTP-CH-I_N"/>
</dbReference>
<dbReference type="InterPro" id="IPR001474">
    <property type="entry name" value="GTP_CycHdrlase_I"/>
</dbReference>
<dbReference type="InterPro" id="IPR018234">
    <property type="entry name" value="GTP_CycHdrlase_I_CS"/>
</dbReference>
<dbReference type="InterPro" id="IPR020602">
    <property type="entry name" value="GTP_CycHdrlase_I_dom"/>
</dbReference>
<dbReference type="NCBIfam" id="TIGR00063">
    <property type="entry name" value="folE"/>
    <property type="match status" value="1"/>
</dbReference>
<dbReference type="NCBIfam" id="NF006825">
    <property type="entry name" value="PRK09347.1-2"/>
    <property type="match status" value="1"/>
</dbReference>
<dbReference type="NCBIfam" id="NF006826">
    <property type="entry name" value="PRK09347.1-3"/>
    <property type="match status" value="1"/>
</dbReference>
<dbReference type="PANTHER" id="PTHR11109:SF7">
    <property type="entry name" value="GTP CYCLOHYDROLASE 1"/>
    <property type="match status" value="1"/>
</dbReference>
<dbReference type="PANTHER" id="PTHR11109">
    <property type="entry name" value="GTP CYCLOHYDROLASE I"/>
    <property type="match status" value="1"/>
</dbReference>
<dbReference type="Pfam" id="PF01227">
    <property type="entry name" value="GTP_cyclohydroI"/>
    <property type="match status" value="1"/>
</dbReference>
<dbReference type="SUPFAM" id="SSF55620">
    <property type="entry name" value="Tetrahydrobiopterin biosynthesis enzymes-like"/>
    <property type="match status" value="1"/>
</dbReference>
<dbReference type="PROSITE" id="PS00859">
    <property type="entry name" value="GTP_CYCLOHYDROL_1_1"/>
    <property type="match status" value="1"/>
</dbReference>
<dbReference type="PROSITE" id="PS00860">
    <property type="entry name" value="GTP_CYCLOHYDROL_1_2"/>
    <property type="match status" value="1"/>
</dbReference>
<protein>
    <recommendedName>
        <fullName>GTP cyclohydrolase 1</fullName>
        <ecNumber>3.5.4.16</ecNumber>
    </recommendedName>
    <alternativeName>
        <fullName>GTP cyclohydrolase I</fullName>
        <shortName>GTP-CH-I</shortName>
    </alternativeName>
</protein>
<feature type="chain" id="PRO_0000119386" description="GTP cyclohydrolase 1">
    <location>
        <begin position="1"/>
        <end position="190"/>
    </location>
</feature>
<feature type="binding site" evidence="1">
    <location>
        <position position="78"/>
    </location>
    <ligand>
        <name>Zn(2+)</name>
        <dbReference type="ChEBI" id="CHEBI:29105"/>
    </ligand>
</feature>
<feature type="binding site" evidence="1">
    <location>
        <position position="81"/>
    </location>
    <ligand>
        <name>Zn(2+)</name>
        <dbReference type="ChEBI" id="CHEBI:29105"/>
    </ligand>
</feature>
<feature type="binding site" evidence="1">
    <location>
        <position position="150"/>
    </location>
    <ligand>
        <name>Zn(2+)</name>
        <dbReference type="ChEBI" id="CHEBI:29105"/>
    </ligand>
</feature>